<reference key="1">
    <citation type="journal article" date="2005" name="Nature">
        <title>Sequencing of Aspergillus nidulans and comparative analysis with A. fumigatus and A. oryzae.</title>
        <authorList>
            <person name="Galagan J.E."/>
            <person name="Calvo S.E."/>
            <person name="Cuomo C."/>
            <person name="Ma L.-J."/>
            <person name="Wortman J.R."/>
            <person name="Batzoglou S."/>
            <person name="Lee S.-I."/>
            <person name="Bastuerkmen M."/>
            <person name="Spevak C.C."/>
            <person name="Clutterbuck J."/>
            <person name="Kapitonov V."/>
            <person name="Jurka J."/>
            <person name="Scazzocchio C."/>
            <person name="Farman M.L."/>
            <person name="Butler J."/>
            <person name="Purcell S."/>
            <person name="Harris S."/>
            <person name="Braus G.H."/>
            <person name="Draht O."/>
            <person name="Busch S."/>
            <person name="D'Enfert C."/>
            <person name="Bouchier C."/>
            <person name="Goldman G.H."/>
            <person name="Bell-Pedersen D."/>
            <person name="Griffiths-Jones S."/>
            <person name="Doonan J.H."/>
            <person name="Yu J."/>
            <person name="Vienken K."/>
            <person name="Pain A."/>
            <person name="Freitag M."/>
            <person name="Selker E.U."/>
            <person name="Archer D.B."/>
            <person name="Penalva M.A."/>
            <person name="Oakley B.R."/>
            <person name="Momany M."/>
            <person name="Tanaka T."/>
            <person name="Kumagai T."/>
            <person name="Asai K."/>
            <person name="Machida M."/>
            <person name="Nierman W.C."/>
            <person name="Denning D.W."/>
            <person name="Caddick M.X."/>
            <person name="Hynes M."/>
            <person name="Paoletti M."/>
            <person name="Fischer R."/>
            <person name="Miller B.L."/>
            <person name="Dyer P.S."/>
            <person name="Sachs M.S."/>
            <person name="Osmani S.A."/>
            <person name="Birren B.W."/>
        </authorList>
    </citation>
    <scope>NUCLEOTIDE SEQUENCE [LARGE SCALE GENOMIC DNA]</scope>
    <source>
        <strain>FGSC A4 / ATCC 38163 / CBS 112.46 / NRRL 194 / M139</strain>
    </source>
</reference>
<reference key="2">
    <citation type="journal article" date="2009" name="Fungal Genet. Biol.">
        <title>The 2008 update of the Aspergillus nidulans genome annotation: a community effort.</title>
        <authorList>
            <person name="Wortman J.R."/>
            <person name="Gilsenan J.M."/>
            <person name="Joardar V."/>
            <person name="Deegan J."/>
            <person name="Clutterbuck J."/>
            <person name="Andersen M.R."/>
            <person name="Archer D."/>
            <person name="Bencina M."/>
            <person name="Braus G."/>
            <person name="Coutinho P."/>
            <person name="von Dohren H."/>
            <person name="Doonan J."/>
            <person name="Driessen A.J."/>
            <person name="Durek P."/>
            <person name="Espeso E."/>
            <person name="Fekete E."/>
            <person name="Flipphi M."/>
            <person name="Estrada C.G."/>
            <person name="Geysens S."/>
            <person name="Goldman G."/>
            <person name="de Groot P.W."/>
            <person name="Hansen K."/>
            <person name="Harris S.D."/>
            <person name="Heinekamp T."/>
            <person name="Helmstaedt K."/>
            <person name="Henrissat B."/>
            <person name="Hofmann G."/>
            <person name="Homan T."/>
            <person name="Horio T."/>
            <person name="Horiuchi H."/>
            <person name="James S."/>
            <person name="Jones M."/>
            <person name="Karaffa L."/>
            <person name="Karanyi Z."/>
            <person name="Kato M."/>
            <person name="Keller N."/>
            <person name="Kelly D.E."/>
            <person name="Kiel J.A."/>
            <person name="Kim J.M."/>
            <person name="van der Klei I.J."/>
            <person name="Klis F.M."/>
            <person name="Kovalchuk A."/>
            <person name="Krasevec N."/>
            <person name="Kubicek C.P."/>
            <person name="Liu B."/>
            <person name="Maccabe A."/>
            <person name="Meyer V."/>
            <person name="Mirabito P."/>
            <person name="Miskei M."/>
            <person name="Mos M."/>
            <person name="Mullins J."/>
            <person name="Nelson D.R."/>
            <person name="Nielsen J."/>
            <person name="Oakley B.R."/>
            <person name="Osmani S.A."/>
            <person name="Pakula T."/>
            <person name="Paszewski A."/>
            <person name="Paulsen I."/>
            <person name="Pilsyk S."/>
            <person name="Pocsi I."/>
            <person name="Punt P.J."/>
            <person name="Ram A.F."/>
            <person name="Ren Q."/>
            <person name="Robellet X."/>
            <person name="Robson G."/>
            <person name="Seiboth B."/>
            <person name="van Solingen P."/>
            <person name="Specht T."/>
            <person name="Sun J."/>
            <person name="Taheri-Talesh N."/>
            <person name="Takeshita N."/>
            <person name="Ussery D."/>
            <person name="vanKuyk P.A."/>
            <person name="Visser H."/>
            <person name="van de Vondervoort P.J."/>
            <person name="de Vries R.P."/>
            <person name="Walton J."/>
            <person name="Xiang X."/>
            <person name="Xiong Y."/>
            <person name="Zeng A.P."/>
            <person name="Brandt B.W."/>
            <person name="Cornell M.J."/>
            <person name="van den Hondel C.A."/>
            <person name="Visser J."/>
            <person name="Oliver S.G."/>
            <person name="Turner G."/>
        </authorList>
    </citation>
    <scope>GENOME REANNOTATION</scope>
    <source>
        <strain>FGSC A4 / ATCC 38163 / CBS 112.46 / NRRL 194 / M139</strain>
    </source>
</reference>
<gene>
    <name type="primary">cbk1</name>
    <name type="ORF">AN10485</name>
</gene>
<keyword id="KW-0067">ATP-binding</keyword>
<keyword id="KW-0418">Kinase</keyword>
<keyword id="KW-0547">Nucleotide-binding</keyword>
<keyword id="KW-1185">Reference proteome</keyword>
<keyword id="KW-0723">Serine/threonine-protein kinase</keyword>
<keyword id="KW-0808">Transferase</keyword>
<evidence type="ECO:0000250" key="1"/>
<evidence type="ECO:0000255" key="2">
    <source>
        <dbReference type="PROSITE-ProRule" id="PRU00159"/>
    </source>
</evidence>
<evidence type="ECO:0000255" key="3">
    <source>
        <dbReference type="PROSITE-ProRule" id="PRU00618"/>
    </source>
</evidence>
<evidence type="ECO:0000255" key="4">
    <source>
        <dbReference type="PROSITE-ProRule" id="PRU10027"/>
    </source>
</evidence>
<evidence type="ECO:0000256" key="5">
    <source>
        <dbReference type="SAM" id="MobiDB-lite"/>
    </source>
</evidence>
<evidence type="ECO:0000305" key="6"/>
<organism>
    <name type="scientific">Emericella nidulans (strain FGSC A4 / ATCC 38163 / CBS 112.46 / NRRL 194 / M139)</name>
    <name type="common">Aspergillus nidulans</name>
    <dbReference type="NCBI Taxonomy" id="227321"/>
    <lineage>
        <taxon>Eukaryota</taxon>
        <taxon>Fungi</taxon>
        <taxon>Dikarya</taxon>
        <taxon>Ascomycota</taxon>
        <taxon>Pezizomycotina</taxon>
        <taxon>Eurotiomycetes</taxon>
        <taxon>Eurotiomycetidae</taxon>
        <taxon>Eurotiales</taxon>
        <taxon>Aspergillaceae</taxon>
        <taxon>Aspergillus</taxon>
        <taxon>Aspergillus subgen. Nidulantes</taxon>
    </lineage>
</organism>
<sequence length="902" mass="102173">MSEDQGQQGQRLSTARGSTCLKQTMTEPALSAGLGTDGPVGAAKDNIRVRIQSRRRSRLLSRLGRKIPTQGRFTVGWYFWFLLIYTSLAVEPVKSHETHSHSSDAEGTSHQDVSDRRNHPCHTPRPSSHSQADSFESVARGQQKEQSRTMREDAVSPVLLDVKRSQSTPVELAKLVSLKLSTSFGSRTVIRRSQPGVRQSVRAAQLQRMMLDRGNPKRERSSGSSTPSSKSSPVDSVSTAPTSVSPGSLAPSGSTNNDPASGFKHIDSQADLPERPLSPVRESPMVSPTIQTTEATAIVKVFLETHFHTLLSGLDARTQRRLELDQYIETFPLSPEEVVRVRKHWVTQERDYLRQYRVLKSRPQDKTSRAGTASLAGFEPLKILGRGSFGVVRLVREKRTDEQTQSGRVPLAPKTNHRQAMTGVKKDVFAMKVIRKSVMIRNCQEAHLRAERDFLVASAKSRWVVPLIASFQDQKHLYLVMDYMVGGDFLGLLIRHNILRESIARWYVAEMILCIEEAHRLRCIHRDVKPDNFLISESGHLKISDFGLAFDGHWAHDQWYFTYQRHSLLKRLGIQIDGDAEDQKLSHDANIQSLGTTREDGSMEDDWIHPPTNGLLHWRDKNQTRTMARSVVGTSQYMAPEVIRGHPYDGRCDWWSLGVILYECLYGFTPFASEDRHQTKLKIHRHLQTLYFPVHRPTDKLVSADAIDVINSLLQEKEFRLSSPKYKQNDAISSKPAKCSFYKPDSSNPSYQGHYVYPDDATDIKSHRFFRGINWEQIHRTSPPFIPMVRGWEDTRYFDDGEHPSDREDDSSDSELDGVQDKWHPLGGKGGLHKPDKPLKADVKPSSYPKGNDGAKDTAIASLKHKKRLKEAKRARDKILRDKRLRRTVLEMLRCLVVVAAT</sequence>
<protein>
    <recommendedName>
        <fullName>Serine/threonine-protein kinase cbk1</fullName>
        <ecNumber>2.7.11.1</ecNumber>
    </recommendedName>
</protein>
<comment type="function">
    <text evidence="1">Protein kinase that seems to play a role in the regulation of cell morphogenesis and proliferation.</text>
</comment>
<comment type="catalytic activity">
    <reaction>
        <text>L-seryl-[protein] + ATP = O-phospho-L-seryl-[protein] + ADP + H(+)</text>
        <dbReference type="Rhea" id="RHEA:17989"/>
        <dbReference type="Rhea" id="RHEA-COMP:9863"/>
        <dbReference type="Rhea" id="RHEA-COMP:11604"/>
        <dbReference type="ChEBI" id="CHEBI:15378"/>
        <dbReference type="ChEBI" id="CHEBI:29999"/>
        <dbReference type="ChEBI" id="CHEBI:30616"/>
        <dbReference type="ChEBI" id="CHEBI:83421"/>
        <dbReference type="ChEBI" id="CHEBI:456216"/>
        <dbReference type="EC" id="2.7.11.1"/>
    </reaction>
</comment>
<comment type="catalytic activity">
    <reaction>
        <text>L-threonyl-[protein] + ATP = O-phospho-L-threonyl-[protein] + ADP + H(+)</text>
        <dbReference type="Rhea" id="RHEA:46608"/>
        <dbReference type="Rhea" id="RHEA-COMP:11060"/>
        <dbReference type="Rhea" id="RHEA-COMP:11605"/>
        <dbReference type="ChEBI" id="CHEBI:15378"/>
        <dbReference type="ChEBI" id="CHEBI:30013"/>
        <dbReference type="ChEBI" id="CHEBI:30616"/>
        <dbReference type="ChEBI" id="CHEBI:61977"/>
        <dbReference type="ChEBI" id="CHEBI:456216"/>
        <dbReference type="EC" id="2.7.11.1"/>
    </reaction>
</comment>
<comment type="similarity">
    <text evidence="6">Belongs to the protein kinase superfamily. STE Ser/Thr protein kinase family. COT1 subfamily.</text>
</comment>
<comment type="sequence caution" evidence="6">
    <conflict type="erroneous initiation">
        <sequence resource="EMBL-CDS" id="CBF75119"/>
    </conflict>
    <text>Truncated N-terminus.</text>
</comment>
<comment type="sequence caution" evidence="6">
    <conflict type="erroneous gene model prediction">
        <sequence resource="EMBL-CDS" id="EAA59217"/>
    </conflict>
    <text>The predicted gene AN3908 has been split into 2 genes: AN10489 and AN10485.</text>
</comment>
<proteinExistence type="inferred from homology"/>
<dbReference type="EC" id="2.7.11.1"/>
<dbReference type="EMBL" id="AACD01000064">
    <property type="protein sequence ID" value="EAA59217.1"/>
    <property type="status" value="ALT_SEQ"/>
    <property type="molecule type" value="Genomic_DNA"/>
</dbReference>
<dbReference type="EMBL" id="BN001302">
    <property type="protein sequence ID" value="CBF75119.1"/>
    <property type="status" value="ALT_INIT"/>
    <property type="molecule type" value="Genomic_DNA"/>
</dbReference>
<dbReference type="RefSeq" id="XP_661512.1">
    <property type="nucleotide sequence ID" value="XM_656420.1"/>
</dbReference>
<dbReference type="SMR" id="P0C1B1"/>
<dbReference type="STRING" id="227321.P0C1B1"/>
<dbReference type="KEGG" id="ani:ANIA_10485"/>
<dbReference type="eggNOG" id="KOG0605">
    <property type="taxonomic scope" value="Eukaryota"/>
</dbReference>
<dbReference type="HOGENOM" id="CLU_005146_1_0_1"/>
<dbReference type="InParanoid" id="P0C1B1"/>
<dbReference type="OrthoDB" id="77911at2759"/>
<dbReference type="Proteomes" id="UP000000560">
    <property type="component" value="Chromosome II"/>
</dbReference>
<dbReference type="GO" id="GO:0005524">
    <property type="term" value="F:ATP binding"/>
    <property type="evidence" value="ECO:0007669"/>
    <property type="project" value="UniProtKB-KW"/>
</dbReference>
<dbReference type="GO" id="GO:0106310">
    <property type="term" value="F:protein serine kinase activity"/>
    <property type="evidence" value="ECO:0007669"/>
    <property type="project" value="RHEA"/>
</dbReference>
<dbReference type="GO" id="GO:0004674">
    <property type="term" value="F:protein serine/threonine kinase activity"/>
    <property type="evidence" value="ECO:0000318"/>
    <property type="project" value="GO_Central"/>
</dbReference>
<dbReference type="GO" id="GO:0035556">
    <property type="term" value="P:intracellular signal transduction"/>
    <property type="evidence" value="ECO:0000318"/>
    <property type="project" value="GO_Central"/>
</dbReference>
<dbReference type="CDD" id="cd21742">
    <property type="entry name" value="MobB_NDR_LATS-like"/>
    <property type="match status" value="1"/>
</dbReference>
<dbReference type="FunFam" id="1.10.510.10:FF:001962">
    <property type="entry name" value="Serine/threonine-protein kinase cbk1"/>
    <property type="match status" value="1"/>
</dbReference>
<dbReference type="Gene3D" id="3.30.200.20">
    <property type="entry name" value="Phosphorylase Kinase, domain 1"/>
    <property type="match status" value="1"/>
</dbReference>
<dbReference type="Gene3D" id="1.10.510.10">
    <property type="entry name" value="Transferase(Phosphotransferase) domain 1"/>
    <property type="match status" value="1"/>
</dbReference>
<dbReference type="InterPro" id="IPR000961">
    <property type="entry name" value="AGC-kinase_C"/>
</dbReference>
<dbReference type="InterPro" id="IPR011009">
    <property type="entry name" value="Kinase-like_dom_sf"/>
</dbReference>
<dbReference type="InterPro" id="IPR000719">
    <property type="entry name" value="Prot_kinase_dom"/>
</dbReference>
<dbReference type="InterPro" id="IPR008271">
    <property type="entry name" value="Ser/Thr_kinase_AS"/>
</dbReference>
<dbReference type="InterPro" id="IPR050236">
    <property type="entry name" value="Ser_Thr_kinase_AGC"/>
</dbReference>
<dbReference type="PANTHER" id="PTHR24356">
    <property type="entry name" value="SERINE/THREONINE-PROTEIN KINASE"/>
    <property type="match status" value="1"/>
</dbReference>
<dbReference type="PANTHER" id="PTHR24356:SF400">
    <property type="entry name" value="SERINE_THREONINE-PROTEIN KINASE CBK1"/>
    <property type="match status" value="1"/>
</dbReference>
<dbReference type="Pfam" id="PF00069">
    <property type="entry name" value="Pkinase"/>
    <property type="match status" value="2"/>
</dbReference>
<dbReference type="SMART" id="SM00133">
    <property type="entry name" value="S_TK_X"/>
    <property type="match status" value="1"/>
</dbReference>
<dbReference type="SMART" id="SM00220">
    <property type="entry name" value="S_TKc"/>
    <property type="match status" value="1"/>
</dbReference>
<dbReference type="SUPFAM" id="SSF56112">
    <property type="entry name" value="Protein kinase-like (PK-like)"/>
    <property type="match status" value="1"/>
</dbReference>
<dbReference type="PROSITE" id="PS51285">
    <property type="entry name" value="AGC_KINASE_CTER"/>
    <property type="match status" value="1"/>
</dbReference>
<dbReference type="PROSITE" id="PS50011">
    <property type="entry name" value="PROTEIN_KINASE_DOM"/>
    <property type="match status" value="1"/>
</dbReference>
<dbReference type="PROSITE" id="PS00108">
    <property type="entry name" value="PROTEIN_KINASE_ST"/>
    <property type="match status" value="1"/>
</dbReference>
<feature type="chain" id="PRO_0000233054" description="Serine/threonine-protein kinase cbk1">
    <location>
        <begin position="1"/>
        <end position="902"/>
    </location>
</feature>
<feature type="domain" description="Protein kinase" evidence="2">
    <location>
        <begin position="378"/>
        <end position="732"/>
    </location>
</feature>
<feature type="domain" description="AGC-kinase C-terminal" evidence="3">
    <location>
        <begin position="771"/>
        <end position="831"/>
    </location>
</feature>
<feature type="region of interest" description="Disordered" evidence="5">
    <location>
        <begin position="1"/>
        <end position="22"/>
    </location>
</feature>
<feature type="region of interest" description="Disordered" evidence="5">
    <location>
        <begin position="97"/>
        <end position="154"/>
    </location>
</feature>
<feature type="region of interest" description="Disordered" evidence="5">
    <location>
        <begin position="207"/>
        <end position="288"/>
    </location>
</feature>
<feature type="region of interest" description="Disordered" evidence="5">
    <location>
        <begin position="797"/>
        <end position="875"/>
    </location>
</feature>
<feature type="compositionally biased region" description="Basic and acidic residues" evidence="5">
    <location>
        <begin position="97"/>
        <end position="118"/>
    </location>
</feature>
<feature type="compositionally biased region" description="Polar residues" evidence="5">
    <location>
        <begin position="125"/>
        <end position="134"/>
    </location>
</feature>
<feature type="compositionally biased region" description="Basic and acidic residues" evidence="5">
    <location>
        <begin position="142"/>
        <end position="154"/>
    </location>
</feature>
<feature type="compositionally biased region" description="Basic and acidic residues" evidence="5">
    <location>
        <begin position="210"/>
        <end position="221"/>
    </location>
</feature>
<feature type="compositionally biased region" description="Low complexity" evidence="5">
    <location>
        <begin position="222"/>
        <end position="239"/>
    </location>
</feature>
<feature type="compositionally biased region" description="Polar residues" evidence="5">
    <location>
        <begin position="240"/>
        <end position="259"/>
    </location>
</feature>
<feature type="compositionally biased region" description="Basic and acidic residues" evidence="5">
    <location>
        <begin position="264"/>
        <end position="274"/>
    </location>
</feature>
<feature type="compositionally biased region" description="Basic and acidic residues" evidence="5">
    <location>
        <begin position="797"/>
        <end position="806"/>
    </location>
</feature>
<feature type="compositionally biased region" description="Acidic residues" evidence="5">
    <location>
        <begin position="807"/>
        <end position="818"/>
    </location>
</feature>
<feature type="compositionally biased region" description="Basic and acidic residues" evidence="5">
    <location>
        <begin position="833"/>
        <end position="843"/>
    </location>
</feature>
<feature type="active site" description="Proton acceptor" evidence="2 4">
    <location>
        <position position="527"/>
    </location>
</feature>
<feature type="binding site" evidence="2">
    <location>
        <begin position="384"/>
        <end position="392"/>
    </location>
    <ligand>
        <name>ATP</name>
        <dbReference type="ChEBI" id="CHEBI:30616"/>
    </ligand>
</feature>
<feature type="binding site" evidence="2">
    <location>
        <position position="432"/>
    </location>
    <ligand>
        <name>ATP</name>
        <dbReference type="ChEBI" id="CHEBI:30616"/>
    </ligand>
</feature>
<name>CBK1_EMENI</name>
<accession>P0C1B1</accession>
<accession>C8V697</accession>
<accession>Q5B6C2</accession>